<evidence type="ECO:0000250" key="1"/>
<evidence type="ECO:0000256" key="2">
    <source>
        <dbReference type="SAM" id="MobiDB-lite"/>
    </source>
</evidence>
<evidence type="ECO:0000305" key="3"/>
<name>H2A_MYTCA</name>
<reference key="1">
    <citation type="journal article" date="2004" name="J. Mol. Evol.">
        <title>Molecular evolutionary characterization of the mussel Mytilus histone multigene family: first record of a tandemly repeated unit of five histone genes containing an H1 subtype with 'orphon' features.</title>
        <authorList>
            <person name="Eirin-Lopez J.M."/>
            <person name="Ruiz F."/>
            <person name="Gonzalez-Tizon A.M."/>
            <person name="Martinez A."/>
            <person name="Sanchez L."/>
            <person name="Mendez J."/>
        </authorList>
    </citation>
    <scope>NUCLEOTIDE SEQUENCE [GENOMIC DNA]</scope>
</reference>
<keyword id="KW-0007">Acetylation</keyword>
<keyword id="KW-0158">Chromosome</keyword>
<keyword id="KW-0238">DNA-binding</keyword>
<keyword id="KW-0488">Methylation</keyword>
<keyword id="KW-0544">Nucleosome core</keyword>
<keyword id="KW-0539">Nucleus</keyword>
<protein>
    <recommendedName>
        <fullName>Histone H2A</fullName>
    </recommendedName>
</protein>
<feature type="initiator methionine" description="Removed" evidence="1">
    <location>
        <position position="1"/>
    </location>
</feature>
<feature type="chain" id="PRO_0000055251" description="Histone H2A">
    <location>
        <begin position="2"/>
        <end position="125"/>
    </location>
</feature>
<feature type="region of interest" description="Disordered" evidence="2">
    <location>
        <begin position="1"/>
        <end position="21"/>
    </location>
</feature>
<feature type="compositionally biased region" description="Basic residues" evidence="2">
    <location>
        <begin position="1"/>
        <end position="18"/>
    </location>
</feature>
<feature type="modified residue" description="N-acetylserine" evidence="1">
    <location>
        <position position="2"/>
    </location>
</feature>
<feature type="modified residue" description="N5-methylglutamine" evidence="1">
    <location>
        <position position="104"/>
    </location>
</feature>
<comment type="function">
    <text>Core component of nucleosome. Nucleosomes wrap and compact DNA into chromatin, limiting DNA accessibility to the cellular machineries which require DNA as a template. Histones thereby play a central role in transcription regulation, DNA repair, DNA replication and chromosomal stability. DNA accessibility is regulated via a complex set of post-translational modifications of histones, also called histone code, and nucleosome remodeling.</text>
</comment>
<comment type="subunit">
    <text>The nucleosome is a histone octamer containing two molecules each of H2A, H2B, H3 and H4 assembled in one H3-H4 heterotetramer and two H2A-H2B heterodimers. The octamer wraps approximately 147 bp of DNA.</text>
</comment>
<comment type="subcellular location">
    <subcellularLocation>
        <location>Nucleus</location>
    </subcellularLocation>
    <subcellularLocation>
        <location>Chromosome</location>
    </subcellularLocation>
</comment>
<comment type="similarity">
    <text evidence="3">Belongs to the histone H2A family.</text>
</comment>
<organism>
    <name type="scientific">Mytilus californianus</name>
    <name type="common">California mussel</name>
    <dbReference type="NCBI Taxonomy" id="6549"/>
    <lineage>
        <taxon>Eukaryota</taxon>
        <taxon>Metazoa</taxon>
        <taxon>Spiralia</taxon>
        <taxon>Lophotrochozoa</taxon>
        <taxon>Mollusca</taxon>
        <taxon>Bivalvia</taxon>
        <taxon>Autobranchia</taxon>
        <taxon>Pteriomorphia</taxon>
        <taxon>Mytilida</taxon>
        <taxon>Mytiloidea</taxon>
        <taxon>Mytilidae</taxon>
        <taxon>Mytilinae</taxon>
        <taxon>Mytilus</taxon>
    </lineage>
</organism>
<accession>Q6WV66</accession>
<proteinExistence type="inferred from homology"/>
<dbReference type="EMBL" id="AY267759">
    <property type="protein sequence ID" value="AAP94678.1"/>
    <property type="molecule type" value="Genomic_DNA"/>
</dbReference>
<dbReference type="SMR" id="Q6WV66"/>
<dbReference type="GO" id="GO:0000786">
    <property type="term" value="C:nucleosome"/>
    <property type="evidence" value="ECO:0007669"/>
    <property type="project" value="UniProtKB-KW"/>
</dbReference>
<dbReference type="GO" id="GO:0005634">
    <property type="term" value="C:nucleus"/>
    <property type="evidence" value="ECO:0007669"/>
    <property type="project" value="UniProtKB-SubCell"/>
</dbReference>
<dbReference type="GO" id="GO:0003677">
    <property type="term" value="F:DNA binding"/>
    <property type="evidence" value="ECO:0007669"/>
    <property type="project" value="UniProtKB-KW"/>
</dbReference>
<dbReference type="GO" id="GO:0046982">
    <property type="term" value="F:protein heterodimerization activity"/>
    <property type="evidence" value="ECO:0007669"/>
    <property type="project" value="InterPro"/>
</dbReference>
<dbReference type="GO" id="GO:0030527">
    <property type="term" value="F:structural constituent of chromatin"/>
    <property type="evidence" value="ECO:0007669"/>
    <property type="project" value="InterPro"/>
</dbReference>
<dbReference type="CDD" id="cd00074">
    <property type="entry name" value="HFD_H2A"/>
    <property type="match status" value="1"/>
</dbReference>
<dbReference type="FunFam" id="1.10.20.10:FF:000020">
    <property type="entry name" value="Histone H2A"/>
    <property type="match status" value="1"/>
</dbReference>
<dbReference type="Gene3D" id="1.10.20.10">
    <property type="entry name" value="Histone, subunit A"/>
    <property type="match status" value="1"/>
</dbReference>
<dbReference type="InterPro" id="IPR009072">
    <property type="entry name" value="Histone-fold"/>
</dbReference>
<dbReference type="InterPro" id="IPR002119">
    <property type="entry name" value="Histone_H2A"/>
</dbReference>
<dbReference type="InterPro" id="IPR007125">
    <property type="entry name" value="Histone_H2A/H2B/H3"/>
</dbReference>
<dbReference type="InterPro" id="IPR032454">
    <property type="entry name" value="Histone_H2A_C"/>
</dbReference>
<dbReference type="InterPro" id="IPR032458">
    <property type="entry name" value="Histone_H2A_CS"/>
</dbReference>
<dbReference type="PANTHER" id="PTHR23430">
    <property type="entry name" value="HISTONE H2A"/>
    <property type="match status" value="1"/>
</dbReference>
<dbReference type="Pfam" id="PF00125">
    <property type="entry name" value="Histone"/>
    <property type="match status" value="1"/>
</dbReference>
<dbReference type="Pfam" id="PF16211">
    <property type="entry name" value="Histone_H2A_C"/>
    <property type="match status" value="1"/>
</dbReference>
<dbReference type="PRINTS" id="PR00620">
    <property type="entry name" value="HISTONEH2A"/>
</dbReference>
<dbReference type="SMART" id="SM00414">
    <property type="entry name" value="H2A"/>
    <property type="match status" value="1"/>
</dbReference>
<dbReference type="SUPFAM" id="SSF47113">
    <property type="entry name" value="Histone-fold"/>
    <property type="match status" value="1"/>
</dbReference>
<dbReference type="PROSITE" id="PS00046">
    <property type="entry name" value="HISTONE_H2A"/>
    <property type="match status" value="1"/>
</dbReference>
<sequence>MSGRGKGGKAKAKAKSRSSRAGLQFPVGRIHRLLRKGNYAERVGAGAPVYLAAVLEYLAAEVLELAGNAARDNKKSRIIPRHLQLAIRNDEELNKLLSGVTIAQGGVLPNIQAVLLPKKTQKAAK</sequence>